<protein>
    <recommendedName>
        <fullName evidence="1">Glycine--tRNA ligase alpha subunit</fullName>
        <ecNumber evidence="1">6.1.1.14</ecNumber>
    </recommendedName>
    <alternativeName>
        <fullName evidence="1">Glycyl-tRNA synthetase alpha subunit</fullName>
        <shortName evidence="1">GlyRS</shortName>
    </alternativeName>
</protein>
<feature type="chain" id="PRO_1000047518" description="Glycine--tRNA ligase alpha subunit">
    <location>
        <begin position="1"/>
        <end position="296"/>
    </location>
</feature>
<proteinExistence type="inferred from homology"/>
<name>SYGA_PARMW</name>
<comment type="catalytic activity">
    <reaction evidence="1">
        <text>tRNA(Gly) + glycine + ATP = glycyl-tRNA(Gly) + AMP + diphosphate</text>
        <dbReference type="Rhea" id="RHEA:16013"/>
        <dbReference type="Rhea" id="RHEA-COMP:9664"/>
        <dbReference type="Rhea" id="RHEA-COMP:9683"/>
        <dbReference type="ChEBI" id="CHEBI:30616"/>
        <dbReference type="ChEBI" id="CHEBI:33019"/>
        <dbReference type="ChEBI" id="CHEBI:57305"/>
        <dbReference type="ChEBI" id="CHEBI:78442"/>
        <dbReference type="ChEBI" id="CHEBI:78522"/>
        <dbReference type="ChEBI" id="CHEBI:456215"/>
        <dbReference type="EC" id="6.1.1.14"/>
    </reaction>
</comment>
<comment type="subunit">
    <text evidence="1">Tetramer of two alpha and two beta subunits.</text>
</comment>
<comment type="subcellular location">
    <subcellularLocation>
        <location evidence="1">Cytoplasm</location>
    </subcellularLocation>
</comment>
<comment type="similarity">
    <text evidence="1">Belongs to the class-II aminoacyl-tRNA synthetase family.</text>
</comment>
<reference key="1">
    <citation type="journal article" date="2003" name="Nature">
        <title>The genome of a motile marine Synechococcus.</title>
        <authorList>
            <person name="Palenik B."/>
            <person name="Brahamsha B."/>
            <person name="Larimer F.W."/>
            <person name="Land M.L."/>
            <person name="Hauser L."/>
            <person name="Chain P."/>
            <person name="Lamerdin J.E."/>
            <person name="Regala W."/>
            <person name="Allen E.E."/>
            <person name="McCarren J."/>
            <person name="Paulsen I.T."/>
            <person name="Dufresne A."/>
            <person name="Partensky F."/>
            <person name="Webb E.A."/>
            <person name="Waterbury J."/>
        </authorList>
    </citation>
    <scope>NUCLEOTIDE SEQUENCE [LARGE SCALE GENOMIC DNA]</scope>
    <source>
        <strain>WH8102</strain>
    </source>
</reference>
<accession>Q7U5N2</accession>
<keyword id="KW-0030">Aminoacyl-tRNA synthetase</keyword>
<keyword id="KW-0067">ATP-binding</keyword>
<keyword id="KW-0963">Cytoplasm</keyword>
<keyword id="KW-0436">Ligase</keyword>
<keyword id="KW-0547">Nucleotide-binding</keyword>
<keyword id="KW-0648">Protein biosynthesis</keyword>
<evidence type="ECO:0000255" key="1">
    <source>
        <dbReference type="HAMAP-Rule" id="MF_00254"/>
    </source>
</evidence>
<gene>
    <name evidence="1" type="primary">glyQ</name>
    <name type="ordered locus">SYNW1671</name>
</gene>
<sequence>MHFQDIISTLQRFWADQGCLLLQPYDTEKGAGTMSPHTVLRAIGPEPWAVAYPEPCRRPTDGRYGDNPNRAQHYFQFQVLIKPSPDGIQETYLASLAALGIKAADHDIRFVEDNWESPTLGAWGVGWEVWLDGMEVTQFTYFQQCGGIDCKPVSIEITYGLERLATYLQDVESIWDLSWNAERNYGDIWLPFEKGQCHFNFEGSDPERLKQLFAIYEAEASDLIEKKLPAPALDFVLKCSHTFNLLEARGVISVTERTATIGRIRTLARRVAEAWLAEREALGFPLLEGGTLPSAA</sequence>
<organism>
    <name type="scientific">Parasynechococcus marenigrum (strain WH8102)</name>
    <dbReference type="NCBI Taxonomy" id="84588"/>
    <lineage>
        <taxon>Bacteria</taxon>
        <taxon>Bacillati</taxon>
        <taxon>Cyanobacteriota</taxon>
        <taxon>Cyanophyceae</taxon>
        <taxon>Synechococcales</taxon>
        <taxon>Prochlorococcaceae</taxon>
        <taxon>Parasynechococcus</taxon>
        <taxon>Parasynechococcus marenigrum</taxon>
    </lineage>
</organism>
<dbReference type="EC" id="6.1.1.14" evidence="1"/>
<dbReference type="EMBL" id="BX569693">
    <property type="protein sequence ID" value="CAE08186.1"/>
    <property type="molecule type" value="Genomic_DNA"/>
</dbReference>
<dbReference type="RefSeq" id="WP_011128533.1">
    <property type="nucleotide sequence ID" value="NC_005070.1"/>
</dbReference>
<dbReference type="SMR" id="Q7U5N2"/>
<dbReference type="STRING" id="84588.SYNW1671"/>
<dbReference type="KEGG" id="syw:SYNW1671"/>
<dbReference type="eggNOG" id="COG0752">
    <property type="taxonomic scope" value="Bacteria"/>
</dbReference>
<dbReference type="HOGENOM" id="CLU_057066_1_0_3"/>
<dbReference type="Proteomes" id="UP000001422">
    <property type="component" value="Chromosome"/>
</dbReference>
<dbReference type="GO" id="GO:0005829">
    <property type="term" value="C:cytosol"/>
    <property type="evidence" value="ECO:0007669"/>
    <property type="project" value="TreeGrafter"/>
</dbReference>
<dbReference type="GO" id="GO:0005524">
    <property type="term" value="F:ATP binding"/>
    <property type="evidence" value="ECO:0007669"/>
    <property type="project" value="UniProtKB-UniRule"/>
</dbReference>
<dbReference type="GO" id="GO:0004820">
    <property type="term" value="F:glycine-tRNA ligase activity"/>
    <property type="evidence" value="ECO:0007669"/>
    <property type="project" value="UniProtKB-UniRule"/>
</dbReference>
<dbReference type="GO" id="GO:0006426">
    <property type="term" value="P:glycyl-tRNA aminoacylation"/>
    <property type="evidence" value="ECO:0007669"/>
    <property type="project" value="UniProtKB-UniRule"/>
</dbReference>
<dbReference type="CDD" id="cd00733">
    <property type="entry name" value="GlyRS_alpha_core"/>
    <property type="match status" value="1"/>
</dbReference>
<dbReference type="FunFam" id="3.30.930.10:FF:000006">
    <property type="entry name" value="Glycine--tRNA ligase alpha subunit"/>
    <property type="match status" value="1"/>
</dbReference>
<dbReference type="Gene3D" id="3.30.930.10">
    <property type="entry name" value="Bira Bifunctional Protein, Domain 2"/>
    <property type="match status" value="1"/>
</dbReference>
<dbReference type="Gene3D" id="1.20.58.180">
    <property type="entry name" value="Class II aaRS and biotin synthetases, domain 2"/>
    <property type="match status" value="1"/>
</dbReference>
<dbReference type="HAMAP" id="MF_00254">
    <property type="entry name" value="Gly_tRNA_synth_alpha"/>
    <property type="match status" value="1"/>
</dbReference>
<dbReference type="InterPro" id="IPR045864">
    <property type="entry name" value="aa-tRNA-synth_II/BPL/LPL"/>
</dbReference>
<dbReference type="InterPro" id="IPR006194">
    <property type="entry name" value="Gly-tRNA-synth_heterodimer"/>
</dbReference>
<dbReference type="InterPro" id="IPR002310">
    <property type="entry name" value="Gly-tRNA_ligase_asu"/>
</dbReference>
<dbReference type="NCBIfam" id="TIGR00388">
    <property type="entry name" value="glyQ"/>
    <property type="match status" value="1"/>
</dbReference>
<dbReference type="NCBIfam" id="NF006827">
    <property type="entry name" value="PRK09348.1"/>
    <property type="match status" value="1"/>
</dbReference>
<dbReference type="PANTHER" id="PTHR30075:SF2">
    <property type="entry name" value="GLYCINE--TRNA LIGASE, CHLOROPLASTIC_MITOCHONDRIAL 2"/>
    <property type="match status" value="1"/>
</dbReference>
<dbReference type="PANTHER" id="PTHR30075">
    <property type="entry name" value="GLYCYL-TRNA SYNTHETASE"/>
    <property type="match status" value="1"/>
</dbReference>
<dbReference type="Pfam" id="PF02091">
    <property type="entry name" value="tRNA-synt_2e"/>
    <property type="match status" value="1"/>
</dbReference>
<dbReference type="PRINTS" id="PR01044">
    <property type="entry name" value="TRNASYNTHGA"/>
</dbReference>
<dbReference type="SUPFAM" id="SSF55681">
    <property type="entry name" value="Class II aaRS and biotin synthetases"/>
    <property type="match status" value="1"/>
</dbReference>
<dbReference type="PROSITE" id="PS50861">
    <property type="entry name" value="AA_TRNA_LIGASE_II_GLYAB"/>
    <property type="match status" value="1"/>
</dbReference>